<feature type="chain" id="PRO_0000451162" description="Very long chain fatty acid elongase 6">
    <location>
        <begin position="1"/>
        <end position="316"/>
    </location>
</feature>
<feature type="transmembrane region" description="Helical" evidence="3">
    <location>
        <begin position="30"/>
        <end position="50"/>
    </location>
</feature>
<feature type="transmembrane region" description="Helical" evidence="3">
    <location>
        <begin position="64"/>
        <end position="84"/>
    </location>
</feature>
<feature type="transmembrane region" description="Helical" evidence="3">
    <location>
        <begin position="117"/>
        <end position="137"/>
    </location>
</feature>
<feature type="transmembrane region" description="Helical" evidence="3">
    <location>
        <begin position="142"/>
        <end position="162"/>
    </location>
</feature>
<feature type="transmembrane region" description="Helical" evidence="3">
    <location>
        <begin position="167"/>
        <end position="189"/>
    </location>
</feature>
<feature type="transmembrane region" description="Helical" evidence="3">
    <location>
        <begin position="202"/>
        <end position="222"/>
    </location>
</feature>
<feature type="transmembrane region" description="Helical" evidence="3">
    <location>
        <begin position="245"/>
        <end position="265"/>
    </location>
</feature>
<feature type="glycosylation site" description="N-linked (GlcNAc...) asparagine" evidence="4">
    <location>
        <position position="11"/>
    </location>
</feature>
<feature type="glycosylation site" description="N-linked (GlcNAc...) asparagine" evidence="4">
    <location>
        <position position="242"/>
    </location>
</feature>
<keyword id="KW-0256">Endoplasmic reticulum</keyword>
<keyword id="KW-0275">Fatty acid biosynthesis</keyword>
<keyword id="KW-0276">Fatty acid metabolism</keyword>
<keyword id="KW-0325">Glycoprotein</keyword>
<keyword id="KW-0444">Lipid biosynthesis</keyword>
<keyword id="KW-0443">Lipid metabolism</keyword>
<keyword id="KW-0472">Membrane</keyword>
<keyword id="KW-0496">Mitochondrion</keyword>
<keyword id="KW-1000">Mitochondrion outer membrane</keyword>
<keyword id="KW-1185">Reference proteome</keyword>
<keyword id="KW-0808">Transferase</keyword>
<keyword id="KW-0812">Transmembrane</keyword>
<keyword id="KW-1133">Transmembrane helix</keyword>
<organism evidence="17">
    <name type="scientific">Drosophila melanogaster</name>
    <name type="common">Fruit fly</name>
    <dbReference type="NCBI Taxonomy" id="7227"/>
    <lineage>
        <taxon>Eukaryota</taxon>
        <taxon>Metazoa</taxon>
        <taxon>Ecdysozoa</taxon>
        <taxon>Arthropoda</taxon>
        <taxon>Hexapoda</taxon>
        <taxon>Insecta</taxon>
        <taxon>Pterygota</taxon>
        <taxon>Neoptera</taxon>
        <taxon>Endopterygota</taxon>
        <taxon>Diptera</taxon>
        <taxon>Brachycera</taxon>
        <taxon>Muscomorpha</taxon>
        <taxon>Ephydroidea</taxon>
        <taxon>Drosophilidae</taxon>
        <taxon>Drosophila</taxon>
        <taxon>Sophophora</taxon>
    </lineage>
</organism>
<gene>
    <name evidence="16" type="primary">Baldspot</name>
    <name evidence="9 16" type="synonym">l(3)01895</name>
    <name evidence="9 16" type="synonym">l(3)02281</name>
    <name evidence="9 16" type="synonym">l(3)04106</name>
    <name evidence="16" type="synonym">l(3)neo21</name>
    <name evidence="16" type="synonym">l(3)neo22</name>
    <name evidence="9 16" type="synonym">noa</name>
    <name evidence="16" type="ORF">CG3971</name>
</gene>
<sequence>MINMDISVTPNYSYIFDFENDFIHQRTRKWMLENWTWVFYYCGIYMLVIFGGQHFMQNRPRFQLRGPLIIWNTLLAMFSIMGAARTAPELIHVLRHYGLFHSVCVPSYIEQDRVCGFWTWLFVLSKLPELGDTIFIVLRKQPLIFLHWYHHITVLIYSWFSYTEYTSSARWFIVMNYCVHSVMYSYYALKAARFNPPRFISMIITSLQLAQMIIGCAINVWANGFLKTHGTSSCHISQRNINLSIAMYSSYFVLFARFFYKAYLAPGGHKSRRMAASLAAQNVVKQSSSPQQASESSKFIGAGEDQAAYLRKAKAQ</sequence>
<dbReference type="EC" id="2.3.1.199" evidence="5 7"/>
<dbReference type="EMBL" id="AH009765">
    <property type="protein sequence ID" value="AAG02080.1"/>
    <property type="molecule type" value="Genomic_DNA"/>
</dbReference>
<dbReference type="EMBL" id="AF279257">
    <property type="protein sequence ID" value="AAG02080.1"/>
    <property type="status" value="JOINED"/>
    <property type="molecule type" value="Genomic_DNA"/>
</dbReference>
<dbReference type="EMBL" id="AF265296">
    <property type="protein sequence ID" value="AAF75771.1"/>
    <property type="molecule type" value="mRNA"/>
</dbReference>
<dbReference type="EMBL" id="AE014296">
    <property type="protein sequence ID" value="AAF49430.2"/>
    <property type="molecule type" value="Genomic_DNA"/>
</dbReference>
<dbReference type="EMBL" id="AE014296">
    <property type="protein sequence ID" value="AAN11736.2"/>
    <property type="molecule type" value="Genomic_DNA"/>
</dbReference>
<dbReference type="EMBL" id="AY060277">
    <property type="protein sequence ID" value="AAL25316.1"/>
    <property type="status" value="ALT_SEQ"/>
    <property type="molecule type" value="mRNA"/>
</dbReference>
<dbReference type="EMBL" id="AY061121">
    <property type="protein sequence ID" value="AAL28669.1"/>
    <property type="molecule type" value="mRNA"/>
</dbReference>
<dbReference type="RefSeq" id="NP_648909.1">
    <property type="nucleotide sequence ID" value="NM_140652.4"/>
</dbReference>
<dbReference type="RefSeq" id="NP_730187.2">
    <property type="nucleotide sequence ID" value="NM_168678.3"/>
</dbReference>
<dbReference type="SMR" id="Q9VV87"/>
<dbReference type="FunCoup" id="Q9VV87">
    <property type="interactions" value="564"/>
</dbReference>
<dbReference type="IntAct" id="Q9VV87">
    <property type="interactions" value="35"/>
</dbReference>
<dbReference type="STRING" id="7227.FBpp0075114"/>
<dbReference type="GlyCosmos" id="Q9VV87">
    <property type="glycosylation" value="2 sites, No reported glycans"/>
</dbReference>
<dbReference type="GlyGen" id="Q9VV87">
    <property type="glycosylation" value="2 sites"/>
</dbReference>
<dbReference type="PaxDb" id="7227-FBpp0075114"/>
<dbReference type="DNASU" id="39860"/>
<dbReference type="EnsemblMetazoa" id="FBtr0075355">
    <property type="protein sequence ID" value="FBpp0075114"/>
    <property type="gene ID" value="FBgn0260960"/>
</dbReference>
<dbReference type="EnsemblMetazoa" id="FBtr0075356">
    <property type="protein sequence ID" value="FBpp0075115"/>
    <property type="gene ID" value="FBgn0260960"/>
</dbReference>
<dbReference type="GeneID" id="39860"/>
<dbReference type="KEGG" id="dme:Dmel_CG3971"/>
<dbReference type="UCSC" id="CG3971-RA">
    <property type="organism name" value="d. melanogaster"/>
</dbReference>
<dbReference type="AGR" id="FB:FBgn0260960"/>
<dbReference type="CTD" id="39860"/>
<dbReference type="FlyBase" id="FBgn0260960">
    <property type="gene designation" value="Baldspot"/>
</dbReference>
<dbReference type="VEuPathDB" id="VectorBase:FBgn0260960"/>
<dbReference type="eggNOG" id="KOG3072">
    <property type="taxonomic scope" value="Eukaryota"/>
</dbReference>
<dbReference type="GeneTree" id="ENSGT01050000244965"/>
<dbReference type="HOGENOM" id="CLU_048483_1_1_1"/>
<dbReference type="InParanoid" id="Q9VV87"/>
<dbReference type="OMA" id="PISWVPI"/>
<dbReference type="OrthoDB" id="10259681at2759"/>
<dbReference type="PhylomeDB" id="Q9VV87"/>
<dbReference type="Reactome" id="R-DME-2046105">
    <property type="pathway name" value="Linoleic acid (LA) metabolism"/>
</dbReference>
<dbReference type="Reactome" id="R-DME-2046106">
    <property type="pathway name" value="alpha-linolenic acid (ALA) metabolism"/>
</dbReference>
<dbReference type="Reactome" id="R-DME-75876">
    <property type="pathway name" value="Synthesis of very long-chain fatty acyl-CoAs"/>
</dbReference>
<dbReference type="SignaLink" id="Q9VV87"/>
<dbReference type="UniPathway" id="UPA00094"/>
<dbReference type="BioGRID-ORCS" id="39860">
    <property type="hits" value="1 hit in 3 CRISPR screens"/>
</dbReference>
<dbReference type="ChiTaRS" id="Baldspot">
    <property type="organism name" value="fly"/>
</dbReference>
<dbReference type="GenomeRNAi" id="39860"/>
<dbReference type="PRO" id="PR:Q9VV87"/>
<dbReference type="Proteomes" id="UP000000803">
    <property type="component" value="Chromosome 3L"/>
</dbReference>
<dbReference type="Bgee" id="FBgn0260960">
    <property type="expression patterns" value="Expressed in crop (Drosophila) and 277 other cell types or tissues"/>
</dbReference>
<dbReference type="ExpressionAtlas" id="Q9VV87">
    <property type="expression patterns" value="baseline and differential"/>
</dbReference>
<dbReference type="GO" id="GO:0005789">
    <property type="term" value="C:endoplasmic reticulum membrane"/>
    <property type="evidence" value="ECO:0000255"/>
    <property type="project" value="FlyBase"/>
</dbReference>
<dbReference type="GO" id="GO:0005741">
    <property type="term" value="C:mitochondrial outer membrane"/>
    <property type="evidence" value="ECO:0000314"/>
    <property type="project" value="FlyBase"/>
</dbReference>
<dbReference type="GO" id="GO:0009922">
    <property type="term" value="F:fatty acid elongase activity"/>
    <property type="evidence" value="ECO:0000315"/>
    <property type="project" value="UniProtKB"/>
</dbReference>
<dbReference type="GO" id="GO:0030497">
    <property type="term" value="P:fatty acid elongation"/>
    <property type="evidence" value="ECO:0000250"/>
    <property type="project" value="FlyBase"/>
</dbReference>
<dbReference type="GO" id="GO:0034625">
    <property type="term" value="P:fatty acid elongation, monounsaturated fatty acid"/>
    <property type="evidence" value="ECO:0000318"/>
    <property type="project" value="GO_Central"/>
</dbReference>
<dbReference type="GO" id="GO:0034626">
    <property type="term" value="P:fatty acid elongation, polyunsaturated fatty acid"/>
    <property type="evidence" value="ECO:0000318"/>
    <property type="project" value="GO_Central"/>
</dbReference>
<dbReference type="GO" id="GO:0019367">
    <property type="term" value="P:fatty acid elongation, saturated fatty acid"/>
    <property type="evidence" value="ECO:0000315"/>
    <property type="project" value="UniProtKB"/>
</dbReference>
<dbReference type="GO" id="GO:0042759">
    <property type="term" value="P:long-chain fatty acid biosynthetic process"/>
    <property type="evidence" value="ECO:0000250"/>
    <property type="project" value="FlyBase"/>
</dbReference>
<dbReference type="GO" id="GO:0030148">
    <property type="term" value="P:sphingolipid biosynthetic process"/>
    <property type="evidence" value="ECO:0000318"/>
    <property type="project" value="GO_Central"/>
</dbReference>
<dbReference type="GO" id="GO:0042761">
    <property type="term" value="P:very long-chain fatty acid biosynthetic process"/>
    <property type="evidence" value="ECO:0000318"/>
    <property type="project" value="GO_Central"/>
</dbReference>
<dbReference type="InterPro" id="IPR030457">
    <property type="entry name" value="ELO_CS"/>
</dbReference>
<dbReference type="InterPro" id="IPR002076">
    <property type="entry name" value="ELO_fam"/>
</dbReference>
<dbReference type="PANTHER" id="PTHR11157:SF17">
    <property type="entry name" value="ELONGATION OF VERY LONG CHAIN FATTY ACIDS PROTEIN 6"/>
    <property type="match status" value="1"/>
</dbReference>
<dbReference type="PANTHER" id="PTHR11157">
    <property type="entry name" value="FATTY ACID ACYL TRANSFERASE-RELATED"/>
    <property type="match status" value="1"/>
</dbReference>
<dbReference type="Pfam" id="PF01151">
    <property type="entry name" value="ELO"/>
    <property type="match status" value="1"/>
</dbReference>
<dbReference type="PROSITE" id="PS01188">
    <property type="entry name" value="ELO"/>
    <property type="match status" value="1"/>
</dbReference>
<protein>
    <recommendedName>
        <fullName evidence="11">Very long chain fatty acid elongase 6</fullName>
        <shortName evidence="10">ELOVL6</shortName>
        <ecNumber evidence="5 7">2.3.1.199</ecNumber>
    </recommendedName>
    <alternativeName>
        <fullName evidence="10">Elongation of very long chain fatty acids protein 6</fullName>
    </alternativeName>
    <alternativeName>
        <fullName evidence="9 16">Neighbor of abl</fullName>
    </alternativeName>
    <alternativeName>
        <fullName evidence="5">Very-long-chain 3-oxoacyl-CoA synthase</fullName>
    </alternativeName>
</protein>
<proteinExistence type="evidence at protein level"/>
<name>ELOV6_DROME</name>
<comment type="function">
    <text evidence="2 7">Catalyzes the first and rate-limiting reaction of the four reactions that constitute the long-chain fatty acids elongation cycle (PubMed:26214738). This process allows the addition of 2 carbons to the chain of long- and very long-chain fatty acids (VLCFAs) per cycle (PubMed:26214738). Condensing enzyme that elongates fatty acids with 12, 14 and 16 carbons with higher activity toward C16:0 acyl-CoAs (By similarity). Catalyzes the synthesis of unsaturated C16 long chain fatty acids and, to a lesser extent, C18:0 and those with low desaturation degree (By similarity). May participate in the production of saturated and monounsaturated VLCFAs of different chain lengths that are involved in multiple biological processes as precursors of membrane lipids and lipid mediators (By similarity).</text>
</comment>
<comment type="catalytic activity">
    <reaction evidence="5 7">
        <text>a very-long-chain acyl-CoA + malonyl-CoA + H(+) = a very-long-chain 3-oxoacyl-CoA + CO2 + CoA</text>
        <dbReference type="Rhea" id="RHEA:32727"/>
        <dbReference type="ChEBI" id="CHEBI:15378"/>
        <dbReference type="ChEBI" id="CHEBI:16526"/>
        <dbReference type="ChEBI" id="CHEBI:57287"/>
        <dbReference type="ChEBI" id="CHEBI:57384"/>
        <dbReference type="ChEBI" id="CHEBI:90725"/>
        <dbReference type="ChEBI" id="CHEBI:90736"/>
        <dbReference type="EC" id="2.3.1.199"/>
    </reaction>
    <physiologicalReaction direction="left-to-right" evidence="7">
        <dbReference type="Rhea" id="RHEA:32728"/>
    </physiologicalReaction>
</comment>
<comment type="catalytic activity">
    <reaction evidence="7">
        <text>hexadecanoyl-CoA + malonyl-CoA + H(+) = 3-oxooctadecanoyl-CoA + CO2 + CoA</text>
        <dbReference type="Rhea" id="RHEA:35315"/>
        <dbReference type="ChEBI" id="CHEBI:15378"/>
        <dbReference type="ChEBI" id="CHEBI:16526"/>
        <dbReference type="ChEBI" id="CHEBI:57287"/>
        <dbReference type="ChEBI" id="CHEBI:57379"/>
        <dbReference type="ChEBI" id="CHEBI:57384"/>
        <dbReference type="ChEBI" id="CHEBI:71407"/>
    </reaction>
    <physiologicalReaction direction="left-to-right" evidence="7">
        <dbReference type="Rhea" id="RHEA:35316"/>
    </physiologicalReaction>
</comment>
<comment type="pathway">
    <text evidence="7">Lipid metabolism; fatty acid biosynthesis.</text>
</comment>
<comment type="subcellular location">
    <subcellularLocation>
        <location evidence="7">Mitochondrion outer membrane</location>
        <topology evidence="11">Multi-pass membrane protein</topology>
    </subcellularLocation>
    <subcellularLocation>
        <location evidence="1">Endoplasmic reticulum membrane</location>
        <topology evidence="11">Multi-pass membrane protein</topology>
    </subcellularLocation>
</comment>
<comment type="tissue specificity">
    <text evidence="6">Detected in the CNS (central nervous system) of third larval instar (at protein level) (PubMed:17666430). Expressed in cyst progenitor cells (at protein level) (PubMed:17666430). In the adult fly, expressed in several tissues including, sperm, follicular epithelium, nurse cells and cyst cells (PubMed:17666430).</text>
</comment>
<comment type="developmental stage">
    <text evidence="6">During embryogenesis, expressed in early cellular blastoderm, involuting mesoderm, invaginating foregut, hindgut, in the CNS (central nervous system) and PNS (peripheral nervous system) during organogenesis, and imaginal disks (PubMed:17666430). In cyst cells, expression is restricted to post-meiotic stages during spermatid differentiation (PubMed:17666430).</text>
</comment>
<comment type="disruption phenotype">
    <text evidence="6 8">RNAi-mediated knockdown in larvae confers resistance to tunicamycin (PubMed:30081392). RNAi-mediated knockdown reduces ER stress response caused by the accumulation of unfolded protein in the ER by reducing Ire1 and PEK/PERK signaling (PubMed:30081392). RNAi-mediated knockdown in imaginal disks results in lethality (PubMed:17666430). RNAi-mediated knockdown in cyst cells results in abnormal sperm cell development with abnormal organization of individualization cones (PubMed:17666430).</text>
</comment>
<comment type="similarity">
    <text evidence="11">Belongs to the ELO family. ELOVL6 subfamily.</text>
</comment>
<comment type="sequence caution" evidence="11">
    <conflict type="miscellaneous discrepancy">
        <sequence resource="EMBL-CDS" id="AAL25316"/>
    </conflict>
    <text>Probable cloning artifact.</text>
</comment>
<reference evidence="13" key="1">
    <citation type="journal article" date="2007" name="J. Cell Sci.">
        <title>The fatty acid elongase NOA is necessary for viability and has a somatic role in Drosophila sperm development.</title>
        <authorList>
            <person name="Jung A."/>
            <person name="Hollmann M."/>
            <person name="Schaefer M.A."/>
        </authorList>
    </citation>
    <scope>NUCLEOTIDE SEQUENCE [GENOMIC DNA]</scope>
    <scope>TISSUE SPECIFICITY</scope>
    <scope>DEVELOPMENTAL STAGE</scope>
    <scope>DISRUPTION PHENOTYPE</scope>
</reference>
<reference evidence="12" key="2">
    <citation type="submission" date="2000-05" db="EMBL/GenBank/DDBJ databases">
        <title>Sequence analysis and characterization of baldspot.</title>
        <authorList>
            <person name="Rice A.H."/>
            <person name="Page C."/>
            <person name="Duffy J.B."/>
        </authorList>
    </citation>
    <scope>NUCLEOTIDE SEQUENCE [MRNA]</scope>
</reference>
<reference evidence="17" key="3">
    <citation type="journal article" date="2000" name="Science">
        <title>The genome sequence of Drosophila melanogaster.</title>
        <authorList>
            <person name="Adams M.D."/>
            <person name="Celniker S.E."/>
            <person name="Holt R.A."/>
            <person name="Evans C.A."/>
            <person name="Gocayne J.D."/>
            <person name="Amanatides P.G."/>
            <person name="Scherer S.E."/>
            <person name="Li P.W."/>
            <person name="Hoskins R.A."/>
            <person name="Galle R.F."/>
            <person name="George R.A."/>
            <person name="Lewis S.E."/>
            <person name="Richards S."/>
            <person name="Ashburner M."/>
            <person name="Henderson S.N."/>
            <person name="Sutton G.G."/>
            <person name="Wortman J.R."/>
            <person name="Yandell M.D."/>
            <person name="Zhang Q."/>
            <person name="Chen L.X."/>
            <person name="Brandon R.C."/>
            <person name="Rogers Y.-H.C."/>
            <person name="Blazej R.G."/>
            <person name="Champe M."/>
            <person name="Pfeiffer B.D."/>
            <person name="Wan K.H."/>
            <person name="Doyle C."/>
            <person name="Baxter E.G."/>
            <person name="Helt G."/>
            <person name="Nelson C.R."/>
            <person name="Miklos G.L.G."/>
            <person name="Abril J.F."/>
            <person name="Agbayani A."/>
            <person name="An H.-J."/>
            <person name="Andrews-Pfannkoch C."/>
            <person name="Baldwin D."/>
            <person name="Ballew R.M."/>
            <person name="Basu A."/>
            <person name="Baxendale J."/>
            <person name="Bayraktaroglu L."/>
            <person name="Beasley E.M."/>
            <person name="Beeson K.Y."/>
            <person name="Benos P.V."/>
            <person name="Berman B.P."/>
            <person name="Bhandari D."/>
            <person name="Bolshakov S."/>
            <person name="Borkova D."/>
            <person name="Botchan M.R."/>
            <person name="Bouck J."/>
            <person name="Brokstein P."/>
            <person name="Brottier P."/>
            <person name="Burtis K.C."/>
            <person name="Busam D.A."/>
            <person name="Butler H."/>
            <person name="Cadieu E."/>
            <person name="Center A."/>
            <person name="Chandra I."/>
            <person name="Cherry J.M."/>
            <person name="Cawley S."/>
            <person name="Dahlke C."/>
            <person name="Davenport L.B."/>
            <person name="Davies P."/>
            <person name="de Pablos B."/>
            <person name="Delcher A."/>
            <person name="Deng Z."/>
            <person name="Mays A.D."/>
            <person name="Dew I."/>
            <person name="Dietz S.M."/>
            <person name="Dodson K."/>
            <person name="Doup L.E."/>
            <person name="Downes M."/>
            <person name="Dugan-Rocha S."/>
            <person name="Dunkov B.C."/>
            <person name="Dunn P."/>
            <person name="Durbin K.J."/>
            <person name="Evangelista C.C."/>
            <person name="Ferraz C."/>
            <person name="Ferriera S."/>
            <person name="Fleischmann W."/>
            <person name="Fosler C."/>
            <person name="Gabrielian A.E."/>
            <person name="Garg N.S."/>
            <person name="Gelbart W.M."/>
            <person name="Glasser K."/>
            <person name="Glodek A."/>
            <person name="Gong F."/>
            <person name="Gorrell J.H."/>
            <person name="Gu Z."/>
            <person name="Guan P."/>
            <person name="Harris M."/>
            <person name="Harris N.L."/>
            <person name="Harvey D.A."/>
            <person name="Heiman T.J."/>
            <person name="Hernandez J.R."/>
            <person name="Houck J."/>
            <person name="Hostin D."/>
            <person name="Houston K.A."/>
            <person name="Howland T.J."/>
            <person name="Wei M.-H."/>
            <person name="Ibegwam C."/>
            <person name="Jalali M."/>
            <person name="Kalush F."/>
            <person name="Karpen G.H."/>
            <person name="Ke Z."/>
            <person name="Kennison J.A."/>
            <person name="Ketchum K.A."/>
            <person name="Kimmel B.E."/>
            <person name="Kodira C.D."/>
            <person name="Kraft C.L."/>
            <person name="Kravitz S."/>
            <person name="Kulp D."/>
            <person name="Lai Z."/>
            <person name="Lasko P."/>
            <person name="Lei Y."/>
            <person name="Levitsky A.A."/>
            <person name="Li J.H."/>
            <person name="Li Z."/>
            <person name="Liang Y."/>
            <person name="Lin X."/>
            <person name="Liu X."/>
            <person name="Mattei B."/>
            <person name="McIntosh T.C."/>
            <person name="McLeod M.P."/>
            <person name="McPherson D."/>
            <person name="Merkulov G."/>
            <person name="Milshina N.V."/>
            <person name="Mobarry C."/>
            <person name="Morris J."/>
            <person name="Moshrefi A."/>
            <person name="Mount S.M."/>
            <person name="Moy M."/>
            <person name="Murphy B."/>
            <person name="Murphy L."/>
            <person name="Muzny D.M."/>
            <person name="Nelson D.L."/>
            <person name="Nelson D.R."/>
            <person name="Nelson K.A."/>
            <person name="Nixon K."/>
            <person name="Nusskern D.R."/>
            <person name="Pacleb J.M."/>
            <person name="Palazzolo M."/>
            <person name="Pittman G.S."/>
            <person name="Pan S."/>
            <person name="Pollard J."/>
            <person name="Puri V."/>
            <person name="Reese M.G."/>
            <person name="Reinert K."/>
            <person name="Remington K."/>
            <person name="Saunders R.D.C."/>
            <person name="Scheeler F."/>
            <person name="Shen H."/>
            <person name="Shue B.C."/>
            <person name="Siden-Kiamos I."/>
            <person name="Simpson M."/>
            <person name="Skupski M.P."/>
            <person name="Smith T.J."/>
            <person name="Spier E."/>
            <person name="Spradling A.C."/>
            <person name="Stapleton M."/>
            <person name="Strong R."/>
            <person name="Sun E."/>
            <person name="Svirskas R."/>
            <person name="Tector C."/>
            <person name="Turner R."/>
            <person name="Venter E."/>
            <person name="Wang A.H."/>
            <person name="Wang X."/>
            <person name="Wang Z.-Y."/>
            <person name="Wassarman D.A."/>
            <person name="Weinstock G.M."/>
            <person name="Weissenbach J."/>
            <person name="Williams S.M."/>
            <person name="Woodage T."/>
            <person name="Worley K.C."/>
            <person name="Wu D."/>
            <person name="Yang S."/>
            <person name="Yao Q.A."/>
            <person name="Ye J."/>
            <person name="Yeh R.-F."/>
            <person name="Zaveri J.S."/>
            <person name="Zhan M."/>
            <person name="Zhang G."/>
            <person name="Zhao Q."/>
            <person name="Zheng L."/>
            <person name="Zheng X.H."/>
            <person name="Zhong F.N."/>
            <person name="Zhong W."/>
            <person name="Zhou X."/>
            <person name="Zhu S.C."/>
            <person name="Zhu X."/>
            <person name="Smith H.O."/>
            <person name="Gibbs R.A."/>
            <person name="Myers E.W."/>
            <person name="Rubin G.M."/>
            <person name="Venter J.C."/>
        </authorList>
    </citation>
    <scope>NUCLEOTIDE SEQUENCE [LARGE SCALE GENOMIC DNA]</scope>
    <source>
        <strain evidence="17">Berkeley</strain>
    </source>
</reference>
<reference evidence="17" key="4">
    <citation type="journal article" date="2002" name="Genome Biol.">
        <title>Annotation of the Drosophila melanogaster euchromatic genome: a systematic review.</title>
        <authorList>
            <person name="Misra S."/>
            <person name="Crosby M.A."/>
            <person name="Mungall C.J."/>
            <person name="Matthews B.B."/>
            <person name="Campbell K.S."/>
            <person name="Hradecky P."/>
            <person name="Huang Y."/>
            <person name="Kaminker J.S."/>
            <person name="Millburn G.H."/>
            <person name="Prochnik S.E."/>
            <person name="Smith C.D."/>
            <person name="Tupy J.L."/>
            <person name="Whitfield E.J."/>
            <person name="Bayraktaroglu L."/>
            <person name="Berman B.P."/>
            <person name="Bettencourt B.R."/>
            <person name="Celniker S.E."/>
            <person name="de Grey A.D.N.J."/>
            <person name="Drysdale R.A."/>
            <person name="Harris N.L."/>
            <person name="Richter J."/>
            <person name="Russo S."/>
            <person name="Schroeder A.J."/>
            <person name="Shu S.Q."/>
            <person name="Stapleton M."/>
            <person name="Yamada C."/>
            <person name="Ashburner M."/>
            <person name="Gelbart W.M."/>
            <person name="Rubin G.M."/>
            <person name="Lewis S.E."/>
        </authorList>
    </citation>
    <scope>GENOME REANNOTATION</scope>
    <source>
        <strain evidence="17">Berkeley</strain>
    </source>
</reference>
<reference evidence="14 15" key="5">
    <citation type="submission" date="2001-10" db="EMBL/GenBank/DDBJ databases">
        <authorList>
            <person name="Stapleton M."/>
            <person name="Brokstein P."/>
            <person name="Hong L."/>
            <person name="Agbayani A."/>
            <person name="Carlson J."/>
            <person name="Champe M."/>
            <person name="Chavez C."/>
            <person name="Dorsett V."/>
            <person name="Farfan D."/>
            <person name="Frise E."/>
            <person name="George R."/>
            <person name="Gonzalez M."/>
            <person name="Guarin H."/>
            <person name="Li P."/>
            <person name="Liao G."/>
            <person name="Miranda A."/>
            <person name="Mungall C.J."/>
            <person name="Nunoo J."/>
            <person name="Pacleb J."/>
            <person name="Paragas V."/>
            <person name="Park S."/>
            <person name="Phouanenavong S."/>
            <person name="Wan K."/>
            <person name="Yu C."/>
            <person name="Lewis S.E."/>
            <person name="Rubin G.M."/>
            <person name="Celniker S."/>
        </authorList>
    </citation>
    <scope>NUCLEOTIDE SEQUENCE [LARGE SCALE MRNA]</scope>
    <source>
        <strain evidence="15">Berkeley</strain>
        <tissue evidence="15">Embryo</tissue>
        <tissue evidence="14">Head</tissue>
    </source>
</reference>
<reference evidence="11" key="6">
    <citation type="journal article" date="2015" name="Nature">
        <title>Regulation of mitochondrial morphology and function by stearoylation of TFR1.</title>
        <authorList>
            <person name="Senyilmaz D."/>
            <person name="Virtue S."/>
            <person name="Xu X."/>
            <person name="Tan C.Y."/>
            <person name="Griffin J.L."/>
            <person name="Miller A.K."/>
            <person name="Vidal-Puig A."/>
            <person name="Teleman A.A."/>
        </authorList>
    </citation>
    <scope>FUNCTION</scope>
    <scope>CATALYTIC ACTIVITY</scope>
    <scope>PATHWAY</scope>
    <scope>SUBCELLULAR LOCATION</scope>
    <scope>DISRUPTION PHENOTYPE</scope>
</reference>
<reference evidence="11" key="7">
    <citation type="journal article" date="2018" name="PLoS Genet.">
        <title>Baldspot/ELOVL6 is a conserved modifier of disease and the ER stress response.</title>
        <authorList>
            <person name="Palu R.A.S."/>
            <person name="Chow C.Y."/>
        </authorList>
    </citation>
    <scope>DISRUPTION PHENOTYPE</scope>
</reference>
<accession>Q9VV87</accession>
<accession>Q95T92</accession>
<accession>Q9NB55</accession>
<evidence type="ECO:0000250" key="1">
    <source>
        <dbReference type="UniProtKB" id="Q920L5"/>
    </source>
</evidence>
<evidence type="ECO:0000250" key="2">
    <source>
        <dbReference type="UniProtKB" id="Q9H5J4"/>
    </source>
</evidence>
<evidence type="ECO:0000255" key="3"/>
<evidence type="ECO:0000255" key="4">
    <source>
        <dbReference type="PROSITE-ProRule" id="PRU00498"/>
    </source>
</evidence>
<evidence type="ECO:0000255" key="5">
    <source>
        <dbReference type="RuleBase" id="RU361115"/>
    </source>
</evidence>
<evidence type="ECO:0000269" key="6">
    <source>
    </source>
</evidence>
<evidence type="ECO:0000269" key="7">
    <source>
    </source>
</evidence>
<evidence type="ECO:0000269" key="8">
    <source>
    </source>
</evidence>
<evidence type="ECO:0000303" key="9">
    <source>
    </source>
</evidence>
<evidence type="ECO:0000303" key="10">
    <source>
    </source>
</evidence>
<evidence type="ECO:0000305" key="11"/>
<evidence type="ECO:0000312" key="12">
    <source>
        <dbReference type="EMBL" id="AAF75771.1"/>
    </source>
</evidence>
<evidence type="ECO:0000312" key="13">
    <source>
        <dbReference type="EMBL" id="AAG02080.1"/>
    </source>
</evidence>
<evidence type="ECO:0000312" key="14">
    <source>
        <dbReference type="EMBL" id="AAL25316.1"/>
    </source>
</evidence>
<evidence type="ECO:0000312" key="15">
    <source>
        <dbReference type="EMBL" id="AAL28669.1"/>
    </source>
</evidence>
<evidence type="ECO:0000312" key="16">
    <source>
        <dbReference type="FlyBase" id="FBgn0260960"/>
    </source>
</evidence>
<evidence type="ECO:0000312" key="17">
    <source>
        <dbReference type="Proteomes" id="UP000000803"/>
    </source>
</evidence>